<evidence type="ECO:0000250" key="1"/>
<evidence type="ECO:0000269" key="2">
    <source>
    </source>
</evidence>
<evidence type="ECO:0000305" key="3"/>
<accession>O94628</accession>
<comment type="function">
    <text evidence="1">Probable methyltransferase.</text>
</comment>
<comment type="subcellular location">
    <subcellularLocation>
        <location evidence="2">Cytoplasm</location>
    </subcellularLocation>
    <subcellularLocation>
        <location evidence="2">Nucleus</location>
    </subcellularLocation>
</comment>
<comment type="similarity">
    <text evidence="3">Belongs to the methyltransferase superfamily.</text>
</comment>
<feature type="chain" id="PRO_0000339155" description="Uncharacterized methyltransferase C1347.09">
    <location>
        <begin position="1"/>
        <end position="284"/>
    </location>
</feature>
<protein>
    <recommendedName>
        <fullName>Uncharacterized methyltransferase C1347.09</fullName>
        <ecNumber>2.1.1.-</ecNumber>
    </recommendedName>
</protein>
<dbReference type="EC" id="2.1.1.-"/>
<dbReference type="EMBL" id="CU329671">
    <property type="protein sequence ID" value="CAB37440.1"/>
    <property type="molecule type" value="Genomic_DNA"/>
</dbReference>
<dbReference type="PIR" id="T39397">
    <property type="entry name" value="T39397"/>
</dbReference>
<dbReference type="RefSeq" id="NP_596701.1">
    <property type="nucleotide sequence ID" value="NM_001022625.2"/>
</dbReference>
<dbReference type="SMR" id="O94628"/>
<dbReference type="BioGRID" id="276549">
    <property type="interactions" value="12"/>
</dbReference>
<dbReference type="STRING" id="284812.O94628"/>
<dbReference type="iPTMnet" id="O94628"/>
<dbReference type="PaxDb" id="4896-SPBC1347.09.1"/>
<dbReference type="EnsemblFungi" id="SPBC1347.09.1">
    <property type="protein sequence ID" value="SPBC1347.09.1:pep"/>
    <property type="gene ID" value="SPBC1347.09"/>
</dbReference>
<dbReference type="KEGG" id="spo:2540005"/>
<dbReference type="PomBase" id="SPBC1347.09"/>
<dbReference type="VEuPathDB" id="FungiDB:SPBC1347.09"/>
<dbReference type="eggNOG" id="KOG1270">
    <property type="taxonomic scope" value="Eukaryota"/>
</dbReference>
<dbReference type="HOGENOM" id="CLU_977143_0_0_1"/>
<dbReference type="InParanoid" id="O94628"/>
<dbReference type="OMA" id="KAHEYDN"/>
<dbReference type="PhylomeDB" id="O94628"/>
<dbReference type="PRO" id="PR:O94628"/>
<dbReference type="Proteomes" id="UP000002485">
    <property type="component" value="Chromosome II"/>
</dbReference>
<dbReference type="GO" id="GO:0019898">
    <property type="term" value="C:extrinsic component of membrane"/>
    <property type="evidence" value="ECO:0000250"/>
    <property type="project" value="PomBase"/>
</dbReference>
<dbReference type="GO" id="GO:0005743">
    <property type="term" value="C:mitochondrial inner membrane"/>
    <property type="evidence" value="ECO:0000250"/>
    <property type="project" value="PomBase"/>
</dbReference>
<dbReference type="GO" id="GO:0005634">
    <property type="term" value="C:nucleus"/>
    <property type="evidence" value="ECO:0007669"/>
    <property type="project" value="UniProtKB-SubCell"/>
</dbReference>
<dbReference type="GO" id="GO:0008168">
    <property type="term" value="F:methyltransferase activity"/>
    <property type="evidence" value="ECO:0007669"/>
    <property type="project" value="UniProtKB-KW"/>
</dbReference>
<dbReference type="GO" id="GO:0032259">
    <property type="term" value="P:methylation"/>
    <property type="evidence" value="ECO:0007669"/>
    <property type="project" value="UniProtKB-KW"/>
</dbReference>
<dbReference type="CDD" id="cd02440">
    <property type="entry name" value="AdoMet_MTases"/>
    <property type="match status" value="1"/>
</dbReference>
<dbReference type="Gene3D" id="3.40.50.150">
    <property type="entry name" value="Vaccinia Virus protein VP39"/>
    <property type="match status" value="1"/>
</dbReference>
<dbReference type="InterPro" id="IPR013217">
    <property type="entry name" value="Methyltransf_12"/>
</dbReference>
<dbReference type="InterPro" id="IPR029063">
    <property type="entry name" value="SAM-dependent_MTases_sf"/>
</dbReference>
<dbReference type="PANTHER" id="PTHR43861">
    <property type="entry name" value="TRANS-ACONITATE 2-METHYLTRANSFERASE-RELATED"/>
    <property type="match status" value="1"/>
</dbReference>
<dbReference type="Pfam" id="PF08242">
    <property type="entry name" value="Methyltransf_12"/>
    <property type="match status" value="1"/>
</dbReference>
<dbReference type="SUPFAM" id="SSF53335">
    <property type="entry name" value="S-adenosyl-L-methionine-dependent methyltransferases"/>
    <property type="match status" value="1"/>
</dbReference>
<gene>
    <name type="ORF">SPBC1347.09</name>
</gene>
<sequence length="284" mass="31710">MSDIVYANVSHYNKIEASKYDNPSTLAISKVISSKILQFEDNSETSLRHDLPKYDQDRLLLTSDDDLTNVNNFWKKSGMSILDFACGTGLISQHLFPYCKQIVGIDVSQDMVDVYNEKFRKMNIPKERACAYVLSLDDLDGNGDEPFSTEFDAVVCSMAYHHIKDLQEVTNKLSKLLKPNGRLFVADLIKGGDTFHGNLHPDEIAKLGVAHHGGFTPQSILNLFKNASLSNAEVIGKAQANVWVDEAKYQRSTQSKDAKTLDLANGEKLYEVKLQLMVISGIKT</sequence>
<keyword id="KW-0963">Cytoplasm</keyword>
<keyword id="KW-0489">Methyltransferase</keyword>
<keyword id="KW-0539">Nucleus</keyword>
<keyword id="KW-1185">Reference proteome</keyword>
<keyword id="KW-0808">Transferase</keyword>
<name>YGE9_SCHPO</name>
<proteinExistence type="inferred from homology"/>
<reference key="1">
    <citation type="journal article" date="2002" name="Nature">
        <title>The genome sequence of Schizosaccharomyces pombe.</title>
        <authorList>
            <person name="Wood V."/>
            <person name="Gwilliam R."/>
            <person name="Rajandream M.A."/>
            <person name="Lyne M.H."/>
            <person name="Lyne R."/>
            <person name="Stewart A."/>
            <person name="Sgouros J.G."/>
            <person name="Peat N."/>
            <person name="Hayles J."/>
            <person name="Baker S.G."/>
            <person name="Basham D."/>
            <person name="Bowman S."/>
            <person name="Brooks K."/>
            <person name="Brown D."/>
            <person name="Brown S."/>
            <person name="Chillingworth T."/>
            <person name="Churcher C.M."/>
            <person name="Collins M."/>
            <person name="Connor R."/>
            <person name="Cronin A."/>
            <person name="Davis P."/>
            <person name="Feltwell T."/>
            <person name="Fraser A."/>
            <person name="Gentles S."/>
            <person name="Goble A."/>
            <person name="Hamlin N."/>
            <person name="Harris D.E."/>
            <person name="Hidalgo J."/>
            <person name="Hodgson G."/>
            <person name="Holroyd S."/>
            <person name="Hornsby T."/>
            <person name="Howarth S."/>
            <person name="Huckle E.J."/>
            <person name="Hunt S."/>
            <person name="Jagels K."/>
            <person name="James K.D."/>
            <person name="Jones L."/>
            <person name="Jones M."/>
            <person name="Leather S."/>
            <person name="McDonald S."/>
            <person name="McLean J."/>
            <person name="Mooney P."/>
            <person name="Moule S."/>
            <person name="Mungall K.L."/>
            <person name="Murphy L.D."/>
            <person name="Niblett D."/>
            <person name="Odell C."/>
            <person name="Oliver K."/>
            <person name="O'Neil S."/>
            <person name="Pearson D."/>
            <person name="Quail M.A."/>
            <person name="Rabbinowitsch E."/>
            <person name="Rutherford K.M."/>
            <person name="Rutter S."/>
            <person name="Saunders D."/>
            <person name="Seeger K."/>
            <person name="Sharp S."/>
            <person name="Skelton J."/>
            <person name="Simmonds M.N."/>
            <person name="Squares R."/>
            <person name="Squares S."/>
            <person name="Stevens K."/>
            <person name="Taylor K."/>
            <person name="Taylor R.G."/>
            <person name="Tivey A."/>
            <person name="Walsh S.V."/>
            <person name="Warren T."/>
            <person name="Whitehead S."/>
            <person name="Woodward J.R."/>
            <person name="Volckaert G."/>
            <person name="Aert R."/>
            <person name="Robben J."/>
            <person name="Grymonprez B."/>
            <person name="Weltjens I."/>
            <person name="Vanstreels E."/>
            <person name="Rieger M."/>
            <person name="Schaefer M."/>
            <person name="Mueller-Auer S."/>
            <person name="Gabel C."/>
            <person name="Fuchs M."/>
            <person name="Duesterhoeft A."/>
            <person name="Fritzc C."/>
            <person name="Holzer E."/>
            <person name="Moestl D."/>
            <person name="Hilbert H."/>
            <person name="Borzym K."/>
            <person name="Langer I."/>
            <person name="Beck A."/>
            <person name="Lehrach H."/>
            <person name="Reinhardt R."/>
            <person name="Pohl T.M."/>
            <person name="Eger P."/>
            <person name="Zimmermann W."/>
            <person name="Wedler H."/>
            <person name="Wambutt R."/>
            <person name="Purnelle B."/>
            <person name="Goffeau A."/>
            <person name="Cadieu E."/>
            <person name="Dreano S."/>
            <person name="Gloux S."/>
            <person name="Lelaure V."/>
            <person name="Mottier S."/>
            <person name="Galibert F."/>
            <person name="Aves S.J."/>
            <person name="Xiang Z."/>
            <person name="Hunt C."/>
            <person name="Moore K."/>
            <person name="Hurst S.M."/>
            <person name="Lucas M."/>
            <person name="Rochet M."/>
            <person name="Gaillardin C."/>
            <person name="Tallada V.A."/>
            <person name="Garzon A."/>
            <person name="Thode G."/>
            <person name="Daga R.R."/>
            <person name="Cruzado L."/>
            <person name="Jimenez J."/>
            <person name="Sanchez M."/>
            <person name="del Rey F."/>
            <person name="Benito J."/>
            <person name="Dominguez A."/>
            <person name="Revuelta J.L."/>
            <person name="Moreno S."/>
            <person name="Armstrong J."/>
            <person name="Forsburg S.L."/>
            <person name="Cerutti L."/>
            <person name="Lowe T."/>
            <person name="McCombie W.R."/>
            <person name="Paulsen I."/>
            <person name="Potashkin J."/>
            <person name="Shpakovski G.V."/>
            <person name="Ussery D."/>
            <person name="Barrell B.G."/>
            <person name="Nurse P."/>
        </authorList>
    </citation>
    <scope>NUCLEOTIDE SEQUENCE [LARGE SCALE GENOMIC DNA]</scope>
    <source>
        <strain>972 / ATCC 24843</strain>
    </source>
</reference>
<reference key="2">
    <citation type="journal article" date="2006" name="Nat. Biotechnol.">
        <title>ORFeome cloning and global analysis of protein localization in the fission yeast Schizosaccharomyces pombe.</title>
        <authorList>
            <person name="Matsuyama A."/>
            <person name="Arai R."/>
            <person name="Yashiroda Y."/>
            <person name="Shirai A."/>
            <person name="Kamata A."/>
            <person name="Sekido S."/>
            <person name="Kobayashi Y."/>
            <person name="Hashimoto A."/>
            <person name="Hamamoto M."/>
            <person name="Hiraoka Y."/>
            <person name="Horinouchi S."/>
            <person name="Yoshida M."/>
        </authorList>
    </citation>
    <scope>SUBCELLULAR LOCATION [LARGE SCALE ANALYSIS]</scope>
</reference>
<organism>
    <name type="scientific">Schizosaccharomyces pombe (strain 972 / ATCC 24843)</name>
    <name type="common">Fission yeast</name>
    <dbReference type="NCBI Taxonomy" id="284812"/>
    <lineage>
        <taxon>Eukaryota</taxon>
        <taxon>Fungi</taxon>
        <taxon>Dikarya</taxon>
        <taxon>Ascomycota</taxon>
        <taxon>Taphrinomycotina</taxon>
        <taxon>Schizosaccharomycetes</taxon>
        <taxon>Schizosaccharomycetales</taxon>
        <taxon>Schizosaccharomycetaceae</taxon>
        <taxon>Schizosaccharomyces</taxon>
    </lineage>
</organism>